<protein>
    <recommendedName>
        <fullName>Thioredoxin domain-containing protein 15</fullName>
    </recommendedName>
</protein>
<comment type="function">
    <text evidence="1">Acts as a positive regulator of ciliary hedgehog signaling. Required for cilia biogenesis.</text>
</comment>
<comment type="subcellular location">
    <subcellularLocation>
        <location evidence="1">Cell projection</location>
        <location evidence="1">Cilium membrane</location>
        <topology evidence="2">Single-pass type I membrane protein</topology>
    </subcellularLocation>
</comment>
<sequence>MQLLCWWQILLWVLGLPARGLEEDSGHTWQEERPVPALQVGSVYLNEEEAAQGHRVQARVAEPSEASLGPRGDPMVVLSVIPGAAEDQRSTEAHDGTCSAQGDEDPRCGGRENLFGLQGAGGFQDREEEYYAEPGVAEAEPVATEDANSTDSLKSPKVNCEERNVTGLENFTLKILNMSQDLMDFLNPNGSDCTLVLFYTPWCRFSASLAPHFNSLPRAFPTLGFLALDASQHSSLSTRFGTVAVPNILLFQGAKPMARFNHTDRTLETLKIFIFNQTGIEAKKNVVVTQADQLGPLPSTLVKTVDWLLVFSLFFLISFIMYATIRTESIRWLIPGQEQEHAE</sequence>
<reference key="1">
    <citation type="journal article" date="2004" name="Genome Res.">
        <title>The status, quality, and expansion of the NIH full-length cDNA project: the Mammalian Gene Collection (MGC).</title>
        <authorList>
            <consortium name="The MGC Project Team"/>
        </authorList>
    </citation>
    <scope>NUCLEOTIDE SEQUENCE [LARGE SCALE MRNA]</scope>
    <source>
        <tissue>Brain</tissue>
    </source>
</reference>
<proteinExistence type="evidence at transcript level"/>
<evidence type="ECO:0000250" key="1">
    <source>
        <dbReference type="UniProtKB" id="Q6P6J9"/>
    </source>
</evidence>
<evidence type="ECO:0000255" key="2"/>
<evidence type="ECO:0000255" key="3">
    <source>
        <dbReference type="PROSITE-ProRule" id="PRU00691"/>
    </source>
</evidence>
<evidence type="ECO:0000256" key="4">
    <source>
        <dbReference type="SAM" id="MobiDB-lite"/>
    </source>
</evidence>
<name>TXD15_RAT</name>
<dbReference type="EMBL" id="BC091340">
    <property type="protein sequence ID" value="AAH91340.1"/>
    <property type="molecule type" value="mRNA"/>
</dbReference>
<dbReference type="RefSeq" id="NP_001020169.1">
    <property type="nucleotide sequence ID" value="NM_001024998.1"/>
</dbReference>
<dbReference type="SMR" id="Q5BJT4"/>
<dbReference type="FunCoup" id="Q5BJT4">
    <property type="interactions" value="766"/>
</dbReference>
<dbReference type="STRING" id="10116.ENSRNOP00000000146"/>
<dbReference type="GlyCosmos" id="Q5BJT4">
    <property type="glycosylation" value="4 sites, No reported glycans"/>
</dbReference>
<dbReference type="GlyGen" id="Q5BJT4">
    <property type="glycosylation" value="4 sites"/>
</dbReference>
<dbReference type="PhosphoSitePlus" id="Q5BJT4"/>
<dbReference type="jPOST" id="Q5BJT4"/>
<dbReference type="PaxDb" id="10116-ENSRNOP00000000146"/>
<dbReference type="Ensembl" id="ENSRNOT00000000146.8">
    <property type="protein sequence ID" value="ENSRNOP00000000146.6"/>
    <property type="gene ID" value="ENSRNOG00000000133.8"/>
</dbReference>
<dbReference type="GeneID" id="307180"/>
<dbReference type="KEGG" id="rno:307180"/>
<dbReference type="UCSC" id="RGD:1304696">
    <property type="organism name" value="rat"/>
</dbReference>
<dbReference type="AGR" id="RGD:1304696"/>
<dbReference type="CTD" id="79770"/>
<dbReference type="RGD" id="1304696">
    <property type="gene designation" value="Txndc15"/>
</dbReference>
<dbReference type="eggNOG" id="KOG2640">
    <property type="taxonomic scope" value="Eukaryota"/>
</dbReference>
<dbReference type="GeneTree" id="ENSGT00390000002845"/>
<dbReference type="HOGENOM" id="CLU_050221_0_0_1"/>
<dbReference type="InParanoid" id="Q5BJT4"/>
<dbReference type="OMA" id="TCEERNV"/>
<dbReference type="OrthoDB" id="1899781at2759"/>
<dbReference type="PhylomeDB" id="Q5BJT4"/>
<dbReference type="PRO" id="PR:Q5BJT4"/>
<dbReference type="Proteomes" id="UP000002494">
    <property type="component" value="Chromosome 17"/>
</dbReference>
<dbReference type="Bgee" id="ENSRNOG00000000133">
    <property type="expression patterns" value="Expressed in ovary and 20 other cell types or tissues"/>
</dbReference>
<dbReference type="GO" id="GO:0060170">
    <property type="term" value="C:ciliary membrane"/>
    <property type="evidence" value="ECO:0007669"/>
    <property type="project" value="UniProtKB-SubCell"/>
</dbReference>
<dbReference type="GO" id="GO:0005929">
    <property type="term" value="C:cilium"/>
    <property type="evidence" value="ECO:0000250"/>
    <property type="project" value="UniProtKB"/>
</dbReference>
<dbReference type="GO" id="GO:0060271">
    <property type="term" value="P:cilium assembly"/>
    <property type="evidence" value="ECO:0000250"/>
    <property type="project" value="UniProtKB"/>
</dbReference>
<dbReference type="GO" id="GO:0045880">
    <property type="term" value="P:positive regulation of smoothened signaling pathway"/>
    <property type="evidence" value="ECO:0000250"/>
    <property type="project" value="UniProtKB"/>
</dbReference>
<dbReference type="CDD" id="cd02999">
    <property type="entry name" value="PDI_a_ERp44_like"/>
    <property type="match status" value="1"/>
</dbReference>
<dbReference type="Gene3D" id="3.40.30.10">
    <property type="entry name" value="Glutaredoxin"/>
    <property type="match status" value="1"/>
</dbReference>
<dbReference type="InterPro" id="IPR036249">
    <property type="entry name" value="Thioredoxin-like_sf"/>
</dbReference>
<dbReference type="InterPro" id="IPR013766">
    <property type="entry name" value="Thioredoxin_domain"/>
</dbReference>
<dbReference type="InterPro" id="IPR042418">
    <property type="entry name" value="TXNDC15"/>
</dbReference>
<dbReference type="PANTHER" id="PTHR14684">
    <property type="entry name" value="THIOREDOXIN DOMAIN-CONTAINING PROTEIN 15"/>
    <property type="match status" value="1"/>
</dbReference>
<dbReference type="PANTHER" id="PTHR14684:SF2">
    <property type="entry name" value="THIOREDOXIN DOMAIN-CONTAINING PROTEIN 15"/>
    <property type="match status" value="1"/>
</dbReference>
<dbReference type="Pfam" id="PF00085">
    <property type="entry name" value="Thioredoxin"/>
    <property type="match status" value="1"/>
</dbReference>
<dbReference type="SUPFAM" id="SSF52833">
    <property type="entry name" value="Thioredoxin-like"/>
    <property type="match status" value="1"/>
</dbReference>
<dbReference type="PROSITE" id="PS51352">
    <property type="entry name" value="THIOREDOXIN_2"/>
    <property type="match status" value="1"/>
</dbReference>
<feature type="signal peptide" evidence="2">
    <location>
        <begin position="1"/>
        <end position="20"/>
    </location>
</feature>
<feature type="chain" id="PRO_0000296096" description="Thioredoxin domain-containing protein 15">
    <location>
        <begin position="21"/>
        <end position="343"/>
    </location>
</feature>
<feature type="topological domain" description="Extracellular" evidence="2">
    <location>
        <begin position="21"/>
        <end position="304"/>
    </location>
</feature>
<feature type="transmembrane region" description="Helical" evidence="2">
    <location>
        <begin position="305"/>
        <end position="325"/>
    </location>
</feature>
<feature type="topological domain" description="Cytoplasmic" evidence="2">
    <location>
        <begin position="326"/>
        <end position="343"/>
    </location>
</feature>
<feature type="domain" description="Thioredoxin" evidence="3">
    <location>
        <begin position="162"/>
        <end position="279"/>
    </location>
</feature>
<feature type="region of interest" description="Disordered" evidence="4">
    <location>
        <begin position="86"/>
        <end position="112"/>
    </location>
</feature>
<feature type="compositionally biased region" description="Basic and acidic residues" evidence="4">
    <location>
        <begin position="86"/>
        <end position="95"/>
    </location>
</feature>
<feature type="glycosylation site" description="N-linked (GlcNAc...) asparagine" evidence="2">
    <location>
        <position position="170"/>
    </location>
</feature>
<feature type="glycosylation site" description="N-linked (GlcNAc...) asparagine" evidence="2">
    <location>
        <position position="177"/>
    </location>
</feature>
<feature type="glycosylation site" description="N-linked (GlcNAc...) asparagine" evidence="2">
    <location>
        <position position="189"/>
    </location>
</feature>
<feature type="glycosylation site" description="N-linked (GlcNAc...) asparagine" evidence="2">
    <location>
        <position position="276"/>
    </location>
</feature>
<organism>
    <name type="scientific">Rattus norvegicus</name>
    <name type="common">Rat</name>
    <dbReference type="NCBI Taxonomy" id="10116"/>
    <lineage>
        <taxon>Eukaryota</taxon>
        <taxon>Metazoa</taxon>
        <taxon>Chordata</taxon>
        <taxon>Craniata</taxon>
        <taxon>Vertebrata</taxon>
        <taxon>Euteleostomi</taxon>
        <taxon>Mammalia</taxon>
        <taxon>Eutheria</taxon>
        <taxon>Euarchontoglires</taxon>
        <taxon>Glires</taxon>
        <taxon>Rodentia</taxon>
        <taxon>Myomorpha</taxon>
        <taxon>Muroidea</taxon>
        <taxon>Muridae</taxon>
        <taxon>Murinae</taxon>
        <taxon>Rattus</taxon>
    </lineage>
</organism>
<keyword id="KW-1003">Cell membrane</keyword>
<keyword id="KW-0966">Cell projection</keyword>
<keyword id="KW-0970">Cilium biogenesis/degradation</keyword>
<keyword id="KW-0325">Glycoprotein</keyword>
<keyword id="KW-0472">Membrane</keyword>
<keyword id="KW-1185">Reference proteome</keyword>
<keyword id="KW-0732">Signal</keyword>
<keyword id="KW-0812">Transmembrane</keyword>
<keyword id="KW-1133">Transmembrane helix</keyword>
<gene>
    <name type="primary">Txndc15</name>
</gene>
<accession>Q5BJT4</accession>